<comment type="function">
    <text evidence="2">Component of the cytochrome b6-f complex, which mediates electron transfer between photosystem II (PSII) and photosystem I (PSI), cyclic electron flow around PSI, and state transitions.</text>
</comment>
<comment type="cofactor">
    <cofactor evidence="2">
        <name>heme</name>
        <dbReference type="ChEBI" id="CHEBI:30413"/>
    </cofactor>
    <text evidence="2">Binds 1 heme group covalently.</text>
</comment>
<comment type="subunit">
    <text evidence="1">The 4 large subunits of the cytochrome b6-f complex are cytochrome b6, subunit IV (17 kDa polypeptide, petD), cytochrome f and the Rieske protein, while the 4 small subunits are PetG, PetL, PetM and PetN. The complex functions as a dimer (By similarity).</text>
</comment>
<comment type="subcellular location">
    <subcellularLocation>
        <location evidence="2">Plastid</location>
        <location evidence="2">Chloroplast thylakoid membrane</location>
        <topology evidence="2">Single-pass membrane protein</topology>
    </subcellularLocation>
</comment>
<comment type="similarity">
    <text evidence="2">Belongs to the cytochrome f family.</text>
</comment>
<gene>
    <name evidence="2" type="primary">petA</name>
</gene>
<feature type="signal peptide" evidence="2">
    <location>
        <begin position="1"/>
        <end position="30"/>
    </location>
</feature>
<feature type="chain" id="PRO_0000342086" description="Cytochrome f">
    <location>
        <begin position="31"/>
        <end position="314"/>
    </location>
</feature>
<feature type="transmembrane region" description="Helical" evidence="2">
    <location>
        <begin position="280"/>
        <end position="300"/>
    </location>
</feature>
<feature type="binding site" description="axial binding residue" evidence="2">
    <location>
        <position position="31"/>
    </location>
    <ligand>
        <name>heme</name>
        <dbReference type="ChEBI" id="CHEBI:30413"/>
    </ligand>
    <ligandPart>
        <name>Fe</name>
        <dbReference type="ChEBI" id="CHEBI:18248"/>
    </ligandPart>
</feature>
<feature type="binding site" description="covalent" evidence="2">
    <location>
        <position position="51"/>
    </location>
    <ligand>
        <name>heme</name>
        <dbReference type="ChEBI" id="CHEBI:30413"/>
    </ligand>
</feature>
<feature type="binding site" description="covalent" evidence="2">
    <location>
        <position position="54"/>
    </location>
    <ligand>
        <name>heme</name>
        <dbReference type="ChEBI" id="CHEBI:30413"/>
    </ligand>
</feature>
<feature type="binding site" description="axial binding residue" evidence="2">
    <location>
        <position position="55"/>
    </location>
    <ligand>
        <name>heme</name>
        <dbReference type="ChEBI" id="CHEBI:30413"/>
    </ligand>
    <ligandPart>
        <name>Fe</name>
        <dbReference type="ChEBI" id="CHEBI:18248"/>
    </ligandPart>
</feature>
<accession>A0T0R9</accession>
<reference key="1">
    <citation type="journal article" date="2007" name="Mol. Genet. Genomics">
        <title>Chloroplast genomes of the diatoms Phaeodactylum tricornutum and Thalassiosira pseudonana: comparison with other plastid genomes of the red lineage.</title>
        <authorList>
            <person name="Oudot-Le Secq M.-P."/>
            <person name="Grimwood J."/>
            <person name="Shapiro H."/>
            <person name="Armbrust E.V."/>
            <person name="Bowler C."/>
            <person name="Green B.R."/>
        </authorList>
    </citation>
    <scope>NUCLEOTIDE SEQUENCE [LARGE SCALE GENOMIC DNA]</scope>
    <source>
        <strain>CCMP1335 / NEPCC58 / CCAP 1085/12</strain>
    </source>
</reference>
<proteinExistence type="inferred from homology"/>
<name>CYF_THAPS</name>
<keyword id="KW-0150">Chloroplast</keyword>
<keyword id="KW-0249">Electron transport</keyword>
<keyword id="KW-0349">Heme</keyword>
<keyword id="KW-0408">Iron</keyword>
<keyword id="KW-0472">Membrane</keyword>
<keyword id="KW-0479">Metal-binding</keyword>
<keyword id="KW-0602">Photosynthesis</keyword>
<keyword id="KW-0934">Plastid</keyword>
<keyword id="KW-0732">Signal</keyword>
<keyword id="KW-0793">Thylakoid</keyword>
<keyword id="KW-0812">Transmembrane</keyword>
<keyword id="KW-1133">Transmembrane helix</keyword>
<keyword id="KW-0813">Transport</keyword>
<evidence type="ECO:0000250" key="1"/>
<evidence type="ECO:0000255" key="2">
    <source>
        <dbReference type="HAMAP-Rule" id="MF_00610"/>
    </source>
</evidence>
<sequence length="314" mass="33988">MATNKFFKSLLFTLTIAISSFGFCVENSSAYPVFAQQGYSNPRAANGKLACANCHLNQKAIEIEAPQGVLPNSVFEIEIKVPYDVNRQQISADGKPADLNVGGILILPKGFKLASKTQISPEVKAKNKGVFISPYSTEFDNILVVGPIAGKTHQELIFPVVAPDPENNPDVKYLTYPFYAGGNRGRGQVYPTGERSNINSFGATQGGQITEITTTEKGESKITIVNSDGATTSQTLSAGLKLLVKQGDIVKQDQPLNIDPNVGGFGQEESEIVLQSSSRILGYLAFCFCLLLTQVLLVLKKKQYEKVQAAELNF</sequence>
<dbReference type="EMBL" id="EF067921">
    <property type="protein sequence ID" value="ABK20754.1"/>
    <property type="molecule type" value="Genomic_DNA"/>
</dbReference>
<dbReference type="RefSeq" id="YP_874531.1">
    <property type="nucleotide sequence ID" value="NC_008589.1"/>
</dbReference>
<dbReference type="SMR" id="A0T0R9"/>
<dbReference type="STRING" id="35128.A0T0R9"/>
<dbReference type="PaxDb" id="35128-Thapsdraft573"/>
<dbReference type="GeneID" id="4524737"/>
<dbReference type="eggNOG" id="ENOG502QPT8">
    <property type="taxonomic scope" value="Eukaryota"/>
</dbReference>
<dbReference type="InParanoid" id="A0T0R9"/>
<dbReference type="OMA" id="PFWAQQN"/>
<dbReference type="GO" id="GO:0009535">
    <property type="term" value="C:chloroplast thylakoid membrane"/>
    <property type="evidence" value="ECO:0007669"/>
    <property type="project" value="UniProtKB-SubCell"/>
</dbReference>
<dbReference type="GO" id="GO:0009055">
    <property type="term" value="F:electron transfer activity"/>
    <property type="evidence" value="ECO:0007669"/>
    <property type="project" value="UniProtKB-UniRule"/>
</dbReference>
<dbReference type="GO" id="GO:0020037">
    <property type="term" value="F:heme binding"/>
    <property type="evidence" value="ECO:0007669"/>
    <property type="project" value="InterPro"/>
</dbReference>
<dbReference type="GO" id="GO:0005506">
    <property type="term" value="F:iron ion binding"/>
    <property type="evidence" value="ECO:0007669"/>
    <property type="project" value="InterPro"/>
</dbReference>
<dbReference type="GO" id="GO:0015979">
    <property type="term" value="P:photosynthesis"/>
    <property type="evidence" value="ECO:0007669"/>
    <property type="project" value="UniProtKB-UniRule"/>
</dbReference>
<dbReference type="FunFam" id="1.20.5.700:FF:000001">
    <property type="entry name" value="Cytochrome f"/>
    <property type="match status" value="1"/>
</dbReference>
<dbReference type="Gene3D" id="2.40.50.100">
    <property type="match status" value="1"/>
</dbReference>
<dbReference type="Gene3D" id="2.60.40.830">
    <property type="entry name" value="Cytochrome f large domain"/>
    <property type="match status" value="1"/>
</dbReference>
<dbReference type="Gene3D" id="1.20.5.700">
    <property type="entry name" value="Single helix bin"/>
    <property type="match status" value="1"/>
</dbReference>
<dbReference type="HAMAP" id="MF_00610">
    <property type="entry name" value="Cytb6_f_cytF"/>
    <property type="match status" value="1"/>
</dbReference>
<dbReference type="InterPro" id="IPR024058">
    <property type="entry name" value="Cyt-f_TM"/>
</dbReference>
<dbReference type="InterPro" id="IPR002325">
    <property type="entry name" value="Cyt_f"/>
</dbReference>
<dbReference type="InterPro" id="IPR024094">
    <property type="entry name" value="Cyt_f_lg_dom"/>
</dbReference>
<dbReference type="InterPro" id="IPR036826">
    <property type="entry name" value="Cyt_f_lg_dom_sf"/>
</dbReference>
<dbReference type="InterPro" id="IPR011054">
    <property type="entry name" value="Rudment_hybrid_motif"/>
</dbReference>
<dbReference type="PANTHER" id="PTHR33288">
    <property type="match status" value="1"/>
</dbReference>
<dbReference type="PANTHER" id="PTHR33288:SF10">
    <property type="entry name" value="CYTOCHROME F"/>
    <property type="match status" value="1"/>
</dbReference>
<dbReference type="Pfam" id="PF01333">
    <property type="entry name" value="Apocytochr_F_C"/>
    <property type="match status" value="1"/>
</dbReference>
<dbReference type="Pfam" id="PF16639">
    <property type="entry name" value="Apocytochr_F_N"/>
    <property type="match status" value="1"/>
</dbReference>
<dbReference type="PRINTS" id="PR00610">
    <property type="entry name" value="CYTOCHROMEF"/>
</dbReference>
<dbReference type="SUPFAM" id="SSF103431">
    <property type="entry name" value="Cytochrome f subunit of the cytochrome b6f complex, transmembrane anchor"/>
    <property type="match status" value="1"/>
</dbReference>
<dbReference type="SUPFAM" id="SSF49441">
    <property type="entry name" value="Cytochrome f, large domain"/>
    <property type="match status" value="1"/>
</dbReference>
<dbReference type="SUPFAM" id="SSF51246">
    <property type="entry name" value="Rudiment single hybrid motif"/>
    <property type="match status" value="1"/>
</dbReference>
<dbReference type="PROSITE" id="PS51010">
    <property type="entry name" value="CYTF"/>
    <property type="match status" value="1"/>
</dbReference>
<geneLocation type="chloroplast"/>
<organism>
    <name type="scientific">Thalassiosira pseudonana</name>
    <name type="common">Marine diatom</name>
    <name type="synonym">Cyclotella nana</name>
    <dbReference type="NCBI Taxonomy" id="35128"/>
    <lineage>
        <taxon>Eukaryota</taxon>
        <taxon>Sar</taxon>
        <taxon>Stramenopiles</taxon>
        <taxon>Ochrophyta</taxon>
        <taxon>Bacillariophyta</taxon>
        <taxon>Coscinodiscophyceae</taxon>
        <taxon>Thalassiosirophycidae</taxon>
        <taxon>Thalassiosirales</taxon>
        <taxon>Thalassiosiraceae</taxon>
        <taxon>Thalassiosira</taxon>
    </lineage>
</organism>
<protein>
    <recommendedName>
        <fullName evidence="2">Cytochrome f</fullName>
    </recommendedName>
</protein>